<organism>
    <name type="scientific">Bacillus subtilis (strain 168)</name>
    <dbReference type="NCBI Taxonomy" id="224308"/>
    <lineage>
        <taxon>Bacteria</taxon>
        <taxon>Bacillati</taxon>
        <taxon>Bacillota</taxon>
        <taxon>Bacilli</taxon>
        <taxon>Bacillales</taxon>
        <taxon>Bacillaceae</taxon>
        <taxon>Bacillus</taxon>
    </lineage>
</organism>
<keyword id="KW-1185">Reference proteome</keyword>
<keyword id="KW-0749">Sporulation</keyword>
<reference key="1">
    <citation type="journal article" date="1993" name="J. Bacteriol.">
        <title>Cloning and characterization of a gene required for assembly of the Bacillus subtilis spore coat.</title>
        <authorList>
            <person name="Beall B."/>
            <person name="Driks A."/>
            <person name="Losick R."/>
            <person name="Moran C.P. Jr."/>
        </authorList>
    </citation>
    <scope>NUCLEOTIDE SEQUENCE [GENOMIC DNA]</scope>
</reference>
<reference key="2">
    <citation type="journal article" date="1997" name="Nature">
        <title>The complete genome sequence of the Gram-positive bacterium Bacillus subtilis.</title>
        <authorList>
            <person name="Kunst F."/>
            <person name="Ogasawara N."/>
            <person name="Moszer I."/>
            <person name="Albertini A.M."/>
            <person name="Alloni G."/>
            <person name="Azevedo V."/>
            <person name="Bertero M.G."/>
            <person name="Bessieres P."/>
            <person name="Bolotin A."/>
            <person name="Borchert S."/>
            <person name="Borriss R."/>
            <person name="Boursier L."/>
            <person name="Brans A."/>
            <person name="Braun M."/>
            <person name="Brignell S.C."/>
            <person name="Bron S."/>
            <person name="Brouillet S."/>
            <person name="Bruschi C.V."/>
            <person name="Caldwell B."/>
            <person name="Capuano V."/>
            <person name="Carter N.M."/>
            <person name="Choi S.-K."/>
            <person name="Codani J.-J."/>
            <person name="Connerton I.F."/>
            <person name="Cummings N.J."/>
            <person name="Daniel R.A."/>
            <person name="Denizot F."/>
            <person name="Devine K.M."/>
            <person name="Duesterhoeft A."/>
            <person name="Ehrlich S.D."/>
            <person name="Emmerson P.T."/>
            <person name="Entian K.-D."/>
            <person name="Errington J."/>
            <person name="Fabret C."/>
            <person name="Ferrari E."/>
            <person name="Foulger D."/>
            <person name="Fritz C."/>
            <person name="Fujita M."/>
            <person name="Fujita Y."/>
            <person name="Fuma S."/>
            <person name="Galizzi A."/>
            <person name="Galleron N."/>
            <person name="Ghim S.-Y."/>
            <person name="Glaser P."/>
            <person name="Goffeau A."/>
            <person name="Golightly E.J."/>
            <person name="Grandi G."/>
            <person name="Guiseppi G."/>
            <person name="Guy B.J."/>
            <person name="Haga K."/>
            <person name="Haiech J."/>
            <person name="Harwood C.R."/>
            <person name="Henaut A."/>
            <person name="Hilbert H."/>
            <person name="Holsappel S."/>
            <person name="Hosono S."/>
            <person name="Hullo M.-F."/>
            <person name="Itaya M."/>
            <person name="Jones L.-M."/>
            <person name="Joris B."/>
            <person name="Karamata D."/>
            <person name="Kasahara Y."/>
            <person name="Klaerr-Blanchard M."/>
            <person name="Klein C."/>
            <person name="Kobayashi Y."/>
            <person name="Koetter P."/>
            <person name="Koningstein G."/>
            <person name="Krogh S."/>
            <person name="Kumano M."/>
            <person name="Kurita K."/>
            <person name="Lapidus A."/>
            <person name="Lardinois S."/>
            <person name="Lauber J."/>
            <person name="Lazarevic V."/>
            <person name="Lee S.-M."/>
            <person name="Levine A."/>
            <person name="Liu H."/>
            <person name="Masuda S."/>
            <person name="Mauel C."/>
            <person name="Medigue C."/>
            <person name="Medina N."/>
            <person name="Mellado R.P."/>
            <person name="Mizuno M."/>
            <person name="Moestl D."/>
            <person name="Nakai S."/>
            <person name="Noback M."/>
            <person name="Noone D."/>
            <person name="O'Reilly M."/>
            <person name="Ogawa K."/>
            <person name="Ogiwara A."/>
            <person name="Oudega B."/>
            <person name="Park S.-H."/>
            <person name="Parro V."/>
            <person name="Pohl T.M."/>
            <person name="Portetelle D."/>
            <person name="Porwollik S."/>
            <person name="Prescott A.M."/>
            <person name="Presecan E."/>
            <person name="Pujic P."/>
            <person name="Purnelle B."/>
            <person name="Rapoport G."/>
            <person name="Rey M."/>
            <person name="Reynolds S."/>
            <person name="Rieger M."/>
            <person name="Rivolta C."/>
            <person name="Rocha E."/>
            <person name="Roche B."/>
            <person name="Rose M."/>
            <person name="Sadaie Y."/>
            <person name="Sato T."/>
            <person name="Scanlan E."/>
            <person name="Schleich S."/>
            <person name="Schroeter R."/>
            <person name="Scoffone F."/>
            <person name="Sekiguchi J."/>
            <person name="Sekowska A."/>
            <person name="Seror S.J."/>
            <person name="Serror P."/>
            <person name="Shin B.-S."/>
            <person name="Soldo B."/>
            <person name="Sorokin A."/>
            <person name="Tacconi E."/>
            <person name="Takagi T."/>
            <person name="Takahashi H."/>
            <person name="Takemaru K."/>
            <person name="Takeuchi M."/>
            <person name="Tamakoshi A."/>
            <person name="Tanaka T."/>
            <person name="Terpstra P."/>
            <person name="Tognoni A."/>
            <person name="Tosato V."/>
            <person name="Uchiyama S."/>
            <person name="Vandenbol M."/>
            <person name="Vannier F."/>
            <person name="Vassarotti A."/>
            <person name="Viari A."/>
            <person name="Wambutt R."/>
            <person name="Wedler E."/>
            <person name="Wedler H."/>
            <person name="Weitzenegger T."/>
            <person name="Winters P."/>
            <person name="Wipat A."/>
            <person name="Yamamoto H."/>
            <person name="Yamane K."/>
            <person name="Yasumoto K."/>
            <person name="Yata K."/>
            <person name="Yoshida K."/>
            <person name="Yoshikawa H.-F."/>
            <person name="Zumstein E."/>
            <person name="Yoshikawa H."/>
            <person name="Danchin A."/>
        </authorList>
    </citation>
    <scope>NUCLEOTIDE SEQUENCE [LARGE SCALE GENOMIC DNA]</scope>
    <source>
        <strain>168</strain>
    </source>
</reference>
<sequence length="575" mass="64977">MPQNHRLQFSVEESICFQKGQEVSELLSISLDPDIRVQEVNDYVSIIGSLELTGEYNIDQNKHTEEIYTDKRFVEQVRKREDGSAELTHCFPVDITIPKNKVSHLQDVFVFIDAFDYQLTDSRILTIQADLAIEGLLDDTQDKEPEIPLYEAPAAFREEELSEPPAHSVVEEPGASSAEEAVLQHEPPAEPPELFISKAGLREELETEKAESEPPESVASEPEAREDVKEEEESEELAVPETEVRAESETEESEPEPDPSEIEIQEIVKAKKETAEPAAAIADVREEADSPAETELREHVGAEESPALEAELHSETVIAKEKEETTVSPNHEYALRQEAQNEEAAQSDQADPALCQEEAEPDEALESVSEAALSIEDSRETASAVYMENDNADLHFHFNQKTSSEEASQEELPEPAYRTFLPEQEEEDSFYSAPKLLEEEEQEEESFEIEVRKTPSAEEPKEETPFQSFQLPESSETERKETDAVPRVAPAAETKEPQTKESDNSLYLTKLFTKEADEFSRMKICIVQQEDTIERLCERYEITSQQLIRMNSLALDDELKAGQILYIPQYKNSHA</sequence>
<proteinExistence type="evidence at protein level"/>
<name>SP6D_BACSU</name>
<evidence type="ECO:0000255" key="1">
    <source>
        <dbReference type="PROSITE-ProRule" id="PRU01118"/>
    </source>
</evidence>
<evidence type="ECO:0000256" key="2">
    <source>
        <dbReference type="SAM" id="MobiDB-lite"/>
    </source>
</evidence>
<protein>
    <recommendedName>
        <fullName>Stage VI sporulation protein D</fullName>
    </recommendedName>
</protein>
<dbReference type="EMBL" id="L07792">
    <property type="protein sequence ID" value="AAA22808.1"/>
    <property type="molecule type" value="Genomic_DNA"/>
</dbReference>
<dbReference type="EMBL" id="AL009126">
    <property type="protein sequence ID" value="CAB14771.1"/>
    <property type="molecule type" value="Genomic_DNA"/>
</dbReference>
<dbReference type="PIR" id="A69716">
    <property type="entry name" value="A69716"/>
</dbReference>
<dbReference type="RefSeq" id="NP_390689.1">
    <property type="nucleotide sequence ID" value="NC_000964.3"/>
</dbReference>
<dbReference type="RefSeq" id="WP_003246083.1">
    <property type="nucleotide sequence ID" value="NZ_OZ025638.1"/>
</dbReference>
<dbReference type="SMR" id="P37963"/>
<dbReference type="FunCoup" id="P37963">
    <property type="interactions" value="35"/>
</dbReference>
<dbReference type="IntAct" id="P37963">
    <property type="interactions" value="2"/>
</dbReference>
<dbReference type="STRING" id="224308.BSU28110"/>
<dbReference type="PaxDb" id="224308-BSU28110"/>
<dbReference type="EnsemblBacteria" id="CAB14771">
    <property type="protein sequence ID" value="CAB14771"/>
    <property type="gene ID" value="BSU_28110"/>
</dbReference>
<dbReference type="GeneID" id="936772"/>
<dbReference type="KEGG" id="bsu:BSU28110"/>
<dbReference type="PATRIC" id="fig|224308.179.peg.3054"/>
<dbReference type="eggNOG" id="COG1388">
    <property type="taxonomic scope" value="Bacteria"/>
</dbReference>
<dbReference type="InParanoid" id="P37963"/>
<dbReference type="OrthoDB" id="2966368at2"/>
<dbReference type="BioCyc" id="BSUB:BSU28110-MONOMER"/>
<dbReference type="Proteomes" id="UP000001570">
    <property type="component" value="Chromosome"/>
</dbReference>
<dbReference type="GO" id="GO:0051117">
    <property type="term" value="F:ATPase binding"/>
    <property type="evidence" value="ECO:0000353"/>
    <property type="project" value="UniProtKB"/>
</dbReference>
<dbReference type="GO" id="GO:0008932">
    <property type="term" value="F:lytic endotransglycosylase activity"/>
    <property type="evidence" value="ECO:0000318"/>
    <property type="project" value="GO_Central"/>
</dbReference>
<dbReference type="GO" id="GO:0030435">
    <property type="term" value="P:sporulation resulting in formation of a cellular spore"/>
    <property type="evidence" value="ECO:0007669"/>
    <property type="project" value="UniProtKB-KW"/>
</dbReference>
<dbReference type="CDD" id="cd00118">
    <property type="entry name" value="LysM"/>
    <property type="match status" value="1"/>
</dbReference>
<dbReference type="Gene3D" id="3.10.350.10">
    <property type="entry name" value="LysM domain"/>
    <property type="match status" value="1"/>
</dbReference>
<dbReference type="InterPro" id="IPR018392">
    <property type="entry name" value="LysM_dom"/>
</dbReference>
<dbReference type="InterPro" id="IPR036779">
    <property type="entry name" value="LysM_dom_sf"/>
</dbReference>
<dbReference type="InterPro" id="IPR048862">
    <property type="entry name" value="SPOCS_spoVID_N"/>
</dbReference>
<dbReference type="PANTHER" id="PTHR33734">
    <property type="entry name" value="LYSM DOMAIN-CONTAINING GPI-ANCHORED PROTEIN 2"/>
    <property type="match status" value="1"/>
</dbReference>
<dbReference type="PANTHER" id="PTHR33734:SF36">
    <property type="entry name" value="STAGE VI SPORULATION PROTEIN D"/>
    <property type="match status" value="1"/>
</dbReference>
<dbReference type="Pfam" id="PF01476">
    <property type="entry name" value="LysM"/>
    <property type="match status" value="1"/>
</dbReference>
<dbReference type="Pfam" id="PF20918">
    <property type="entry name" value="SPOCS_spoVID-N"/>
    <property type="match status" value="1"/>
</dbReference>
<dbReference type="SMART" id="SM00257">
    <property type="entry name" value="LysM"/>
    <property type="match status" value="1"/>
</dbReference>
<dbReference type="SUPFAM" id="SSF54106">
    <property type="entry name" value="LysM domain"/>
    <property type="match status" value="1"/>
</dbReference>
<dbReference type="PROSITE" id="PS51782">
    <property type="entry name" value="LYSM"/>
    <property type="match status" value="1"/>
</dbReference>
<accession>P37963</accession>
<comment type="function">
    <text>Required for assembly of a normal spore coat. May be a component of the innermost layer of the spore coat that aids in its adherence to the prespore.</text>
</comment>
<comment type="interaction">
    <interactant intactId="EBI-6419142">
        <id>P37963</id>
    </interactant>
    <interactant intactId="EBI-6407152">
        <id>P14016</id>
        <label>cotE</label>
    </interactant>
    <organismsDiffer>false</organismsDiffer>
    <experiments>2</experiments>
</comment>
<comment type="developmental stage">
    <text>Expression is initiated around the second hour of sporulation and continues throughout development. May be expressed predominantly in the mother cell.</text>
</comment>
<feature type="chain" id="PRO_0000072089" description="Stage VI sporulation protein D">
    <location>
        <begin position="1"/>
        <end position="575"/>
    </location>
</feature>
<feature type="domain" description="LysM" evidence="1">
    <location>
        <begin position="523"/>
        <end position="567"/>
    </location>
</feature>
<feature type="region of interest" description="Disordered" evidence="2">
    <location>
        <begin position="159"/>
        <end position="502"/>
    </location>
</feature>
<feature type="compositionally biased region" description="Basic and acidic residues" evidence="2">
    <location>
        <begin position="200"/>
        <end position="212"/>
    </location>
</feature>
<feature type="compositionally biased region" description="Acidic residues" evidence="2">
    <location>
        <begin position="229"/>
        <end position="238"/>
    </location>
</feature>
<feature type="compositionally biased region" description="Acidic residues" evidence="2">
    <location>
        <begin position="249"/>
        <end position="264"/>
    </location>
</feature>
<feature type="compositionally biased region" description="Basic and acidic residues" evidence="2">
    <location>
        <begin position="266"/>
        <end position="275"/>
    </location>
</feature>
<feature type="compositionally biased region" description="Basic and acidic residues" evidence="2">
    <location>
        <begin position="283"/>
        <end position="302"/>
    </location>
</feature>
<feature type="compositionally biased region" description="Basic and acidic residues" evidence="2">
    <location>
        <begin position="310"/>
        <end position="325"/>
    </location>
</feature>
<feature type="compositionally biased region" description="Acidic residues" evidence="2">
    <location>
        <begin position="438"/>
        <end position="448"/>
    </location>
</feature>
<feature type="compositionally biased region" description="Basic and acidic residues" evidence="2">
    <location>
        <begin position="449"/>
        <end position="464"/>
    </location>
</feature>
<feature type="compositionally biased region" description="Polar residues" evidence="2">
    <location>
        <begin position="465"/>
        <end position="474"/>
    </location>
</feature>
<feature type="compositionally biased region" description="Basic and acidic residues" evidence="2">
    <location>
        <begin position="493"/>
        <end position="502"/>
    </location>
</feature>
<gene>
    <name type="primary">spoVID</name>
    <name type="ordered locus">BSU28110</name>
</gene>